<comment type="function">
    <text evidence="1">Produces ATP from ADP in the presence of a proton gradient across the membrane. The gamma chain is believed to be important in regulating ATPase activity and the flow of protons through the CF(0) complex.</text>
</comment>
<comment type="subunit">
    <text evidence="1">F-type ATPases have 2 components, CF(1) - the catalytic core - and CF(0) - the membrane proton channel. CF(1) has five subunits: alpha(3), beta(3), gamma(1), delta(1), epsilon(1). CF(0) has three main subunits: a, b and c.</text>
</comment>
<comment type="subcellular location">
    <subcellularLocation>
        <location evidence="1">Cell membrane</location>
        <topology evidence="1">Peripheral membrane protein</topology>
    </subcellularLocation>
</comment>
<comment type="similarity">
    <text evidence="1">Belongs to the ATPase gamma chain family.</text>
</comment>
<evidence type="ECO:0000255" key="1">
    <source>
        <dbReference type="HAMAP-Rule" id="MF_00815"/>
    </source>
</evidence>
<proteinExistence type="inferred from homology"/>
<reference key="1">
    <citation type="journal article" date="2007" name="J. Bacteriol.">
        <title>Genome sequence of Avery's virulent serotype 2 strain D39 of Streptococcus pneumoniae and comparison with that of unencapsulated laboratory strain R6.</title>
        <authorList>
            <person name="Lanie J.A."/>
            <person name="Ng W.-L."/>
            <person name="Kazmierczak K.M."/>
            <person name="Andrzejewski T.M."/>
            <person name="Davidsen T.M."/>
            <person name="Wayne K.J."/>
            <person name="Tettelin H."/>
            <person name="Glass J.I."/>
            <person name="Winkler M.E."/>
        </authorList>
    </citation>
    <scope>NUCLEOTIDE SEQUENCE [LARGE SCALE GENOMIC DNA]</scope>
    <source>
        <strain>D39 / NCTC 7466</strain>
    </source>
</reference>
<organism>
    <name type="scientific">Streptococcus pneumoniae serotype 2 (strain D39 / NCTC 7466)</name>
    <dbReference type="NCBI Taxonomy" id="373153"/>
    <lineage>
        <taxon>Bacteria</taxon>
        <taxon>Bacillati</taxon>
        <taxon>Bacillota</taxon>
        <taxon>Bacilli</taxon>
        <taxon>Lactobacillales</taxon>
        <taxon>Streptococcaceae</taxon>
        <taxon>Streptococcus</taxon>
    </lineage>
</organism>
<protein>
    <recommendedName>
        <fullName evidence="1">ATP synthase gamma chain</fullName>
    </recommendedName>
    <alternativeName>
        <fullName evidence="1">ATP synthase F1 sector gamma subunit</fullName>
    </alternativeName>
    <alternativeName>
        <fullName evidence="1">F-ATPase gamma subunit</fullName>
    </alternativeName>
</protein>
<accession>Q04HT8</accession>
<name>ATPG_STRP2</name>
<keyword id="KW-0066">ATP synthesis</keyword>
<keyword id="KW-1003">Cell membrane</keyword>
<keyword id="KW-0139">CF(1)</keyword>
<keyword id="KW-0375">Hydrogen ion transport</keyword>
<keyword id="KW-0406">Ion transport</keyword>
<keyword id="KW-0472">Membrane</keyword>
<keyword id="KW-1185">Reference proteome</keyword>
<keyword id="KW-0813">Transport</keyword>
<dbReference type="EMBL" id="CP000410">
    <property type="protein sequence ID" value="ABJ54201.1"/>
    <property type="molecule type" value="Genomic_DNA"/>
</dbReference>
<dbReference type="RefSeq" id="WP_000301212.1">
    <property type="nucleotide sequence ID" value="NZ_JAMLJR010000008.1"/>
</dbReference>
<dbReference type="SMR" id="Q04HT8"/>
<dbReference type="PaxDb" id="373153-SPD_1336"/>
<dbReference type="KEGG" id="spd:SPD_1336"/>
<dbReference type="eggNOG" id="COG0224">
    <property type="taxonomic scope" value="Bacteria"/>
</dbReference>
<dbReference type="HOGENOM" id="CLU_050669_0_1_9"/>
<dbReference type="BioCyc" id="SPNE373153:G1G6V-1441-MONOMER"/>
<dbReference type="Proteomes" id="UP000001452">
    <property type="component" value="Chromosome"/>
</dbReference>
<dbReference type="GO" id="GO:0005886">
    <property type="term" value="C:plasma membrane"/>
    <property type="evidence" value="ECO:0007669"/>
    <property type="project" value="UniProtKB-SubCell"/>
</dbReference>
<dbReference type="GO" id="GO:0045259">
    <property type="term" value="C:proton-transporting ATP synthase complex"/>
    <property type="evidence" value="ECO:0007669"/>
    <property type="project" value="UniProtKB-KW"/>
</dbReference>
<dbReference type="GO" id="GO:0005524">
    <property type="term" value="F:ATP binding"/>
    <property type="evidence" value="ECO:0007669"/>
    <property type="project" value="UniProtKB-UniRule"/>
</dbReference>
<dbReference type="GO" id="GO:0046933">
    <property type="term" value="F:proton-transporting ATP synthase activity, rotational mechanism"/>
    <property type="evidence" value="ECO:0007669"/>
    <property type="project" value="UniProtKB-UniRule"/>
</dbReference>
<dbReference type="GO" id="GO:0042777">
    <property type="term" value="P:proton motive force-driven plasma membrane ATP synthesis"/>
    <property type="evidence" value="ECO:0007669"/>
    <property type="project" value="UniProtKB-UniRule"/>
</dbReference>
<dbReference type="CDD" id="cd12151">
    <property type="entry name" value="F1-ATPase_gamma"/>
    <property type="match status" value="1"/>
</dbReference>
<dbReference type="FunFam" id="3.40.1380.10:FF:000002">
    <property type="entry name" value="ATP synthase gamma chain"/>
    <property type="match status" value="1"/>
</dbReference>
<dbReference type="Gene3D" id="3.40.1380.10">
    <property type="match status" value="1"/>
</dbReference>
<dbReference type="Gene3D" id="1.10.287.80">
    <property type="entry name" value="ATP synthase, gamma subunit, helix hairpin domain"/>
    <property type="match status" value="1"/>
</dbReference>
<dbReference type="HAMAP" id="MF_00815">
    <property type="entry name" value="ATP_synth_gamma_bact"/>
    <property type="match status" value="1"/>
</dbReference>
<dbReference type="InterPro" id="IPR035968">
    <property type="entry name" value="ATP_synth_F1_ATPase_gsu"/>
</dbReference>
<dbReference type="InterPro" id="IPR000131">
    <property type="entry name" value="ATP_synth_F1_gsu"/>
</dbReference>
<dbReference type="InterPro" id="IPR023632">
    <property type="entry name" value="ATP_synth_F1_gsu_CS"/>
</dbReference>
<dbReference type="NCBIfam" id="TIGR01146">
    <property type="entry name" value="ATPsyn_F1gamma"/>
    <property type="match status" value="1"/>
</dbReference>
<dbReference type="NCBIfam" id="NF004147">
    <property type="entry name" value="PRK05621.2-1"/>
    <property type="match status" value="1"/>
</dbReference>
<dbReference type="PANTHER" id="PTHR11693">
    <property type="entry name" value="ATP SYNTHASE GAMMA CHAIN"/>
    <property type="match status" value="1"/>
</dbReference>
<dbReference type="PANTHER" id="PTHR11693:SF22">
    <property type="entry name" value="ATP SYNTHASE SUBUNIT GAMMA, MITOCHONDRIAL"/>
    <property type="match status" value="1"/>
</dbReference>
<dbReference type="Pfam" id="PF00231">
    <property type="entry name" value="ATP-synt"/>
    <property type="match status" value="1"/>
</dbReference>
<dbReference type="PRINTS" id="PR00126">
    <property type="entry name" value="ATPASEGAMMA"/>
</dbReference>
<dbReference type="SUPFAM" id="SSF52943">
    <property type="entry name" value="ATP synthase (F1-ATPase), gamma subunit"/>
    <property type="match status" value="1"/>
</dbReference>
<dbReference type="PROSITE" id="PS00153">
    <property type="entry name" value="ATPASE_GAMMA"/>
    <property type="match status" value="1"/>
</dbReference>
<sequence>MAVSLNDIKTKIASTKNTSQITNAMQMVSAAKLGRSEEAARNFQVYAQKVRKLLTDILHGNGAGASTNPMLISRSVKKTGYIVITSDRGLVGGYNSSILKAVMELKEEYHPDGKGFEMICIGGMGADFFKARGIQPLYELRGLSDQPSFDQVRKIISKTVEMYQNELFDELYVCYNHHVNTLTSQMRVEQMLPIVDLDPNEADEEYSLTFELETSREEILEQLLPQFAESMIYGAIIDAKTAENAAGMTAMQTATDNAKKVINDLTIQYNRARQAAITQEITEIVAGASALE</sequence>
<gene>
    <name evidence="1" type="primary">atpG</name>
    <name type="ordered locus">SPD_1336</name>
</gene>
<feature type="chain" id="PRO_1000053348" description="ATP synthase gamma chain">
    <location>
        <begin position="1"/>
        <end position="292"/>
    </location>
</feature>